<gene>
    <name type="primary">IL18</name>
    <name type="synonym">IGIF</name>
</gene>
<organism>
    <name type="scientific">Boselaphus tragocamelus</name>
    <name type="common">Nilgai</name>
    <dbReference type="NCBI Taxonomy" id="9917"/>
    <lineage>
        <taxon>Eukaryota</taxon>
        <taxon>Metazoa</taxon>
        <taxon>Chordata</taxon>
        <taxon>Craniata</taxon>
        <taxon>Vertebrata</taxon>
        <taxon>Euteleostomi</taxon>
        <taxon>Mammalia</taxon>
        <taxon>Eutheria</taxon>
        <taxon>Laurasiatheria</taxon>
        <taxon>Artiodactyla</taxon>
        <taxon>Ruminantia</taxon>
        <taxon>Pecora</taxon>
        <taxon>Bovidae</taxon>
        <taxon>Bovinae</taxon>
        <taxon>Boselaphus</taxon>
    </lineage>
</organism>
<reference key="1">
    <citation type="submission" date="2004-11" db="EMBL/GenBank/DDBJ databases">
        <authorList>
            <person name="Saini M."/>
            <person name="Swarup D."/>
            <person name="Yadav M.P."/>
            <person name="Singh G.R."/>
            <person name="Arora B.M."/>
            <person name="Chandra P."/>
            <person name="Das D.K."/>
            <person name="Gupta P.K."/>
        </authorList>
    </citation>
    <scope>NUCLEOTIDE SEQUENCE [MRNA]</scope>
</reference>
<feature type="propeptide" id="PRO_0000253503" evidence="1">
    <location>
        <begin position="1"/>
        <end position="36"/>
    </location>
</feature>
<feature type="chain" id="PRO_0000253504" description="Interleukin-18">
    <location>
        <begin position="37"/>
        <end position="193"/>
    </location>
</feature>
<feature type="site" description="Cleavage; by CASP1, CASP4 and CASP5" evidence="2">
    <location>
        <begin position="36"/>
        <end position="37"/>
    </location>
</feature>
<feature type="site" description="Cleavage; by CASP3" evidence="2">
    <location>
        <begin position="71"/>
        <end position="72"/>
    </location>
</feature>
<sequence>MAAEQVEDNCISFVEMKFINNTLYFVAENDEDLESDHFGKLEPKLSIIRNLNDQVLFINQGNQPVFEDMPDSDCPDNAPQTIFIIYMYKDSLTRGLAVTISVQCKKMSTLSCENKIVSFKEMNPPDNIDNEGSDIIFFQRSVPGHDDKIQFESSLYKGYFLACKKENDLFKLILKKQDDNGDKSVTFTVQNQH</sequence>
<dbReference type="EMBL" id="AY842499">
    <property type="protein sequence ID" value="AAW34191.1"/>
    <property type="molecule type" value="mRNA"/>
</dbReference>
<dbReference type="SMR" id="Q5I931"/>
<dbReference type="GO" id="GO:0005829">
    <property type="term" value="C:cytosol"/>
    <property type="evidence" value="ECO:0007669"/>
    <property type="project" value="UniProtKB-SubCell"/>
</dbReference>
<dbReference type="GO" id="GO:0005615">
    <property type="term" value="C:extracellular space"/>
    <property type="evidence" value="ECO:0007669"/>
    <property type="project" value="UniProtKB-KW"/>
</dbReference>
<dbReference type="GO" id="GO:0005125">
    <property type="term" value="F:cytokine activity"/>
    <property type="evidence" value="ECO:0000250"/>
    <property type="project" value="UniProtKB"/>
</dbReference>
<dbReference type="GO" id="GO:0045515">
    <property type="term" value="F:interleukin-18 receptor binding"/>
    <property type="evidence" value="ECO:0000250"/>
    <property type="project" value="UniProtKB"/>
</dbReference>
<dbReference type="GO" id="GO:0071222">
    <property type="term" value="P:cellular response to lipopolysaccharide"/>
    <property type="evidence" value="ECO:0007669"/>
    <property type="project" value="TreeGrafter"/>
</dbReference>
<dbReference type="GO" id="GO:0050830">
    <property type="term" value="P:defense response to Gram-positive bacterium"/>
    <property type="evidence" value="ECO:0000250"/>
    <property type="project" value="UniProtKB"/>
</dbReference>
<dbReference type="GO" id="GO:0061436">
    <property type="term" value="P:establishment of skin barrier"/>
    <property type="evidence" value="ECO:0000250"/>
    <property type="project" value="UniProtKB"/>
</dbReference>
<dbReference type="GO" id="GO:0006955">
    <property type="term" value="P:immune response"/>
    <property type="evidence" value="ECO:0007669"/>
    <property type="project" value="InterPro"/>
</dbReference>
<dbReference type="GO" id="GO:0006954">
    <property type="term" value="P:inflammatory response"/>
    <property type="evidence" value="ECO:0007669"/>
    <property type="project" value="UniProtKB-KW"/>
</dbReference>
<dbReference type="GO" id="GO:0035655">
    <property type="term" value="P:interleukin-18-mediated signaling pathway"/>
    <property type="evidence" value="ECO:0000250"/>
    <property type="project" value="UniProtKB"/>
</dbReference>
<dbReference type="GO" id="GO:0050729">
    <property type="term" value="P:positive regulation of inflammatory response"/>
    <property type="evidence" value="ECO:0000250"/>
    <property type="project" value="UniProtKB"/>
</dbReference>
<dbReference type="GO" id="GO:0051092">
    <property type="term" value="P:positive regulation of NF-kappaB transcription factor activity"/>
    <property type="evidence" value="ECO:0000250"/>
    <property type="project" value="UniProtKB"/>
</dbReference>
<dbReference type="GO" id="GO:2000556">
    <property type="term" value="P:positive regulation of T-helper 1 cell cytokine production"/>
    <property type="evidence" value="ECO:0000250"/>
    <property type="project" value="UniProtKB"/>
</dbReference>
<dbReference type="GO" id="GO:0032729">
    <property type="term" value="P:positive regulation of type II interferon production"/>
    <property type="evidence" value="ECO:0000250"/>
    <property type="project" value="UniProtKB"/>
</dbReference>
<dbReference type="CDD" id="cd23298">
    <property type="entry name" value="beta-trefoil_IL18"/>
    <property type="match status" value="1"/>
</dbReference>
<dbReference type="FunFam" id="2.80.10.50:FF:000043">
    <property type="entry name" value="Interleukin-18"/>
    <property type="match status" value="1"/>
</dbReference>
<dbReference type="Gene3D" id="2.80.10.50">
    <property type="match status" value="1"/>
</dbReference>
<dbReference type="InterPro" id="IPR015529">
    <property type="entry name" value="IL-18"/>
</dbReference>
<dbReference type="InterPro" id="IPR000975">
    <property type="entry name" value="IL-1_fam"/>
</dbReference>
<dbReference type="InterPro" id="IPR008996">
    <property type="entry name" value="IL1/FGF"/>
</dbReference>
<dbReference type="PANTHER" id="PTHR10078">
    <property type="entry name" value="INTERLEUKIN-1 FAMILY MEMBER"/>
    <property type="match status" value="1"/>
</dbReference>
<dbReference type="PANTHER" id="PTHR10078:SF35">
    <property type="entry name" value="INTERLEUKIN-18"/>
    <property type="match status" value="1"/>
</dbReference>
<dbReference type="Pfam" id="PF00340">
    <property type="entry name" value="IL1"/>
    <property type="match status" value="1"/>
</dbReference>
<dbReference type="PIRSF" id="PIRSF015162">
    <property type="entry name" value="Interleukin_18"/>
    <property type="match status" value="1"/>
</dbReference>
<dbReference type="PRINTS" id="PR01933">
    <property type="entry name" value="INTRLEUKIN18"/>
</dbReference>
<dbReference type="SUPFAM" id="SSF50353">
    <property type="entry name" value="Cytokine"/>
    <property type="match status" value="1"/>
</dbReference>
<protein>
    <recommendedName>
        <fullName>Interleukin-18</fullName>
        <shortName>IL-18</shortName>
    </recommendedName>
    <alternativeName>
        <fullName>Interferon gamma-inducing factor</fullName>
        <shortName>IFN-gamma-inducing factor</shortName>
    </alternativeName>
    <alternativeName>
        <fullName>Interleukin-1 gamma</fullName>
        <shortName>IL-1 gamma</shortName>
    </alternativeName>
</protein>
<evidence type="ECO:0000250" key="1">
    <source>
        <dbReference type="UniProtKB" id="P70380"/>
    </source>
</evidence>
<evidence type="ECO:0000250" key="2">
    <source>
        <dbReference type="UniProtKB" id="Q14116"/>
    </source>
</evidence>
<evidence type="ECO:0000305" key="3"/>
<proteinExistence type="evidence at transcript level"/>
<name>IL18_BOSTR</name>
<accession>Q5I931</accession>
<comment type="function">
    <text evidence="2">Pro-inflammatory cytokine primarily involved in epithelial barrier repair, polarized T-helper 1 (Th1) cell and natural killer (NK) cell immune responses. Upon binding to IL18R1 and IL18RAP, forms a signaling ternary complex which activates NF-kappa-B, triggering synthesis of inflammatory mediators. Synergizes with IL12/interleukin-12 to induce IFNG synthesis from T-helper 1 (Th1) cells and natural killer (NK) cells. Involved in transduction of inflammation downstream of pyroptosis: its mature form is specifically released in the extracellular milieu by passing through the gasdermin-D (GSDMD) pore.</text>
</comment>
<comment type="subunit">
    <text evidence="2">Forms a ternary complex with ligand-binding receptor subunit IL18R1 and signaling receptor subunit IL18RAP at the plasma membrane. Mature IL18 first binds to IL18R1 forming a low affinity binary complex, which then interacts with IL18RAP to form a high affinity ternary complex that signals inside the cell. Interacts with cargo receptor TMED10; the interaction mediates the translocation from the cytoplasm into the ERGIC (endoplasmic reticulum-Golgi intermediate compartment) and thereby secretion.</text>
</comment>
<comment type="subcellular location">
    <subcellularLocation>
        <location evidence="2">Cytoplasm</location>
        <location evidence="2">Cytosol</location>
    </subcellularLocation>
    <subcellularLocation>
        <location evidence="2">Secreted</location>
    </subcellularLocation>
    <text evidence="2">The precursor is cytosolic. In response to inflammasome-activating signals, cleaved and secreted. Mature form is secreted and released in the extracellular milieu by passing through the gasdermin-D (GSDMD) pore. In contrast, the precursor form is not released, due to the presence of an acidic region that is proteolytically removed by CASP1, CASP4 or CASP5 during maturation. The secretion is dependent on protein unfolding and facilitated by the cargo receptor TMED10.</text>
</comment>
<comment type="PTM">
    <text evidence="2">The pro-IL-18 precursor is processed by CASP1, CASP4 or CASP5 to yield its mature, active form. The pro-IL-18 precursor features autoinhibitory interactions between the propeptide and the post-cleavage-site region, preventing recognition by the IL18R1 receptor. Processing by CASP1, CASP4 or CASP5 induces conformational changes to generate critical receptor-binding sites. The mature form is then secreted and released in the extracellular milieu by passing through the gasdermin-D (GSDMD) pore. In contrast, cleavage by CASP3 inactivates IL18.</text>
</comment>
<comment type="similarity">
    <text evidence="3">Belongs to the IL-1 family.</text>
</comment>
<keyword id="KW-0202">Cytokine</keyword>
<keyword id="KW-0963">Cytoplasm</keyword>
<keyword id="KW-0395">Inflammatory response</keyword>
<keyword id="KW-0964">Secreted</keyword>